<proteinExistence type="inferred from homology"/>
<accession>B7V0A6</accession>
<name>RS20_PSEA8</name>
<feature type="chain" id="PRO_1000126497" description="Small ribosomal subunit protein bS20">
    <location>
        <begin position="1"/>
        <end position="91"/>
    </location>
</feature>
<feature type="region of interest" description="Disordered" evidence="2">
    <location>
        <begin position="1"/>
        <end position="23"/>
    </location>
</feature>
<feature type="compositionally biased region" description="Basic residues" evidence="2">
    <location>
        <begin position="7"/>
        <end position="20"/>
    </location>
</feature>
<sequence length="91" mass="9918">MANTPSAKKRAKQAEKRRSHNASLRSMVRTYIKNVVKAIDAKDLEKAQAAFTAAVPVIDRMADKGIIHKNKAARHKSRLSGHIKALSTAAA</sequence>
<protein>
    <recommendedName>
        <fullName evidence="1">Small ribosomal subunit protein bS20</fullName>
    </recommendedName>
    <alternativeName>
        <fullName evidence="3">30S ribosomal protein S20</fullName>
    </alternativeName>
</protein>
<gene>
    <name evidence="1" type="primary">rpsT</name>
    <name type="ordered locus">PLES_49461</name>
</gene>
<reference key="1">
    <citation type="journal article" date="2009" name="Genome Res.">
        <title>Newly introduced genomic prophage islands are critical determinants of in vivo competitiveness in the Liverpool epidemic strain of Pseudomonas aeruginosa.</title>
        <authorList>
            <person name="Winstanley C."/>
            <person name="Langille M.G.I."/>
            <person name="Fothergill J.L."/>
            <person name="Kukavica-Ibrulj I."/>
            <person name="Paradis-Bleau C."/>
            <person name="Sanschagrin F."/>
            <person name="Thomson N.R."/>
            <person name="Winsor G.L."/>
            <person name="Quail M.A."/>
            <person name="Lennard N."/>
            <person name="Bignell A."/>
            <person name="Clarke L."/>
            <person name="Seeger K."/>
            <person name="Saunders D."/>
            <person name="Harris D."/>
            <person name="Parkhill J."/>
            <person name="Hancock R.E.W."/>
            <person name="Brinkman F.S.L."/>
            <person name="Levesque R.C."/>
        </authorList>
    </citation>
    <scope>NUCLEOTIDE SEQUENCE [LARGE SCALE GENOMIC DNA]</scope>
    <source>
        <strain>LESB58</strain>
    </source>
</reference>
<comment type="function">
    <text evidence="1">Binds directly to 16S ribosomal RNA.</text>
</comment>
<comment type="similarity">
    <text evidence="1">Belongs to the bacterial ribosomal protein bS20 family.</text>
</comment>
<keyword id="KW-0687">Ribonucleoprotein</keyword>
<keyword id="KW-0689">Ribosomal protein</keyword>
<keyword id="KW-0694">RNA-binding</keyword>
<keyword id="KW-0699">rRNA-binding</keyword>
<evidence type="ECO:0000255" key="1">
    <source>
        <dbReference type="HAMAP-Rule" id="MF_00500"/>
    </source>
</evidence>
<evidence type="ECO:0000256" key="2">
    <source>
        <dbReference type="SAM" id="MobiDB-lite"/>
    </source>
</evidence>
<evidence type="ECO:0000305" key="3"/>
<dbReference type="EMBL" id="FM209186">
    <property type="protein sequence ID" value="CAW29700.1"/>
    <property type="molecule type" value="Genomic_DNA"/>
</dbReference>
<dbReference type="RefSeq" id="WP_003094744.1">
    <property type="nucleotide sequence ID" value="NC_011770.1"/>
</dbReference>
<dbReference type="SMR" id="B7V0A6"/>
<dbReference type="KEGG" id="pag:PLES_49461"/>
<dbReference type="HOGENOM" id="CLU_160655_4_0_6"/>
<dbReference type="GO" id="GO:0005829">
    <property type="term" value="C:cytosol"/>
    <property type="evidence" value="ECO:0007669"/>
    <property type="project" value="TreeGrafter"/>
</dbReference>
<dbReference type="GO" id="GO:0015935">
    <property type="term" value="C:small ribosomal subunit"/>
    <property type="evidence" value="ECO:0007669"/>
    <property type="project" value="TreeGrafter"/>
</dbReference>
<dbReference type="GO" id="GO:0070181">
    <property type="term" value="F:small ribosomal subunit rRNA binding"/>
    <property type="evidence" value="ECO:0007669"/>
    <property type="project" value="TreeGrafter"/>
</dbReference>
<dbReference type="GO" id="GO:0003735">
    <property type="term" value="F:structural constituent of ribosome"/>
    <property type="evidence" value="ECO:0007669"/>
    <property type="project" value="InterPro"/>
</dbReference>
<dbReference type="GO" id="GO:0006412">
    <property type="term" value="P:translation"/>
    <property type="evidence" value="ECO:0007669"/>
    <property type="project" value="UniProtKB-UniRule"/>
</dbReference>
<dbReference type="FunFam" id="1.20.58.110:FF:000001">
    <property type="entry name" value="30S ribosomal protein S20"/>
    <property type="match status" value="1"/>
</dbReference>
<dbReference type="Gene3D" id="1.20.58.110">
    <property type="entry name" value="Ribosomal protein S20"/>
    <property type="match status" value="1"/>
</dbReference>
<dbReference type="HAMAP" id="MF_00500">
    <property type="entry name" value="Ribosomal_bS20"/>
    <property type="match status" value="1"/>
</dbReference>
<dbReference type="InterPro" id="IPR002583">
    <property type="entry name" value="Ribosomal_bS20"/>
</dbReference>
<dbReference type="InterPro" id="IPR036510">
    <property type="entry name" value="Ribosomal_bS20_sf"/>
</dbReference>
<dbReference type="NCBIfam" id="TIGR00029">
    <property type="entry name" value="S20"/>
    <property type="match status" value="1"/>
</dbReference>
<dbReference type="PANTHER" id="PTHR33398">
    <property type="entry name" value="30S RIBOSOMAL PROTEIN S20"/>
    <property type="match status" value="1"/>
</dbReference>
<dbReference type="PANTHER" id="PTHR33398:SF1">
    <property type="entry name" value="SMALL RIBOSOMAL SUBUNIT PROTEIN BS20C"/>
    <property type="match status" value="1"/>
</dbReference>
<dbReference type="Pfam" id="PF01649">
    <property type="entry name" value="Ribosomal_S20p"/>
    <property type="match status" value="1"/>
</dbReference>
<dbReference type="SUPFAM" id="SSF46992">
    <property type="entry name" value="Ribosomal protein S20"/>
    <property type="match status" value="1"/>
</dbReference>
<organism>
    <name type="scientific">Pseudomonas aeruginosa (strain LESB58)</name>
    <dbReference type="NCBI Taxonomy" id="557722"/>
    <lineage>
        <taxon>Bacteria</taxon>
        <taxon>Pseudomonadati</taxon>
        <taxon>Pseudomonadota</taxon>
        <taxon>Gammaproteobacteria</taxon>
        <taxon>Pseudomonadales</taxon>
        <taxon>Pseudomonadaceae</taxon>
        <taxon>Pseudomonas</taxon>
    </lineage>
</organism>